<proteinExistence type="evidence at protein level"/>
<organism>
    <name type="scientific">Oryza sativa subsp. japonica</name>
    <name type="common">Rice</name>
    <dbReference type="NCBI Taxonomy" id="39947"/>
    <lineage>
        <taxon>Eukaryota</taxon>
        <taxon>Viridiplantae</taxon>
        <taxon>Streptophyta</taxon>
        <taxon>Embryophyta</taxon>
        <taxon>Tracheophyta</taxon>
        <taxon>Spermatophyta</taxon>
        <taxon>Magnoliopsida</taxon>
        <taxon>Liliopsida</taxon>
        <taxon>Poales</taxon>
        <taxon>Poaceae</taxon>
        <taxon>BOP clade</taxon>
        <taxon>Oryzoideae</taxon>
        <taxon>Oryzeae</taxon>
        <taxon>Oryzinae</taxon>
        <taxon>Oryza</taxon>
        <taxon>Oryza sativa</taxon>
    </lineage>
</organism>
<keyword id="KW-0002">3D-structure</keyword>
<keyword id="KW-0903">Direct protein sequencing</keyword>
<keyword id="KW-1015">Disulfide bond</keyword>
<keyword id="KW-0446">Lipid-binding</keyword>
<keyword id="KW-1185">Reference proteome</keyword>
<keyword id="KW-0732">Signal</keyword>
<keyword id="KW-0813">Transport</keyword>
<reference key="1">
    <citation type="journal article" date="2005" name="BMC Biol.">
        <title>The sequence of rice chromosomes 11 and 12, rich in disease resistance genes and recent gene duplications.</title>
        <authorList>
            <consortium name="The rice chromosomes 11 and 12 sequencing consortia"/>
        </authorList>
    </citation>
    <scope>NUCLEOTIDE SEQUENCE [LARGE SCALE GENOMIC DNA]</scope>
    <source>
        <strain>cv. Nipponbare</strain>
    </source>
</reference>
<reference key="2">
    <citation type="journal article" date="2005" name="Nature">
        <title>The map-based sequence of the rice genome.</title>
        <authorList>
            <consortium name="International rice genome sequencing project (IRGSP)"/>
        </authorList>
    </citation>
    <scope>NUCLEOTIDE SEQUENCE [LARGE SCALE GENOMIC DNA]</scope>
    <source>
        <strain>cv. Nipponbare</strain>
    </source>
</reference>
<reference key="3">
    <citation type="journal article" date="2008" name="Nucleic Acids Res.">
        <title>The rice annotation project database (RAP-DB): 2008 update.</title>
        <authorList>
            <consortium name="The rice annotation project (RAP)"/>
        </authorList>
    </citation>
    <scope>GENOME REANNOTATION</scope>
    <source>
        <strain>cv. Nipponbare</strain>
    </source>
</reference>
<reference key="4">
    <citation type="journal article" date="2013" name="Rice">
        <title>Improvement of the Oryza sativa Nipponbare reference genome using next generation sequence and optical map data.</title>
        <authorList>
            <person name="Kawahara Y."/>
            <person name="de la Bastide M."/>
            <person name="Hamilton J.P."/>
            <person name="Kanamori H."/>
            <person name="McCombie W.R."/>
            <person name="Ouyang S."/>
            <person name="Schwartz D.C."/>
            <person name="Tanaka T."/>
            <person name="Wu J."/>
            <person name="Zhou S."/>
            <person name="Childs K.L."/>
            <person name="Davidson R.M."/>
            <person name="Lin H."/>
            <person name="Quesada-Ocampo L."/>
            <person name="Vaillancourt B."/>
            <person name="Sakai H."/>
            <person name="Lee S.S."/>
            <person name="Kim J."/>
            <person name="Numa H."/>
            <person name="Itoh T."/>
            <person name="Buell C.R."/>
            <person name="Matsumoto T."/>
        </authorList>
    </citation>
    <scope>GENOME REANNOTATION</scope>
    <source>
        <strain>cv. Nipponbare</strain>
    </source>
</reference>
<reference key="5">
    <citation type="journal article" date="2005" name="PLoS Biol.">
        <title>The genomes of Oryza sativa: a history of duplications.</title>
        <authorList>
            <person name="Yu J."/>
            <person name="Wang J."/>
            <person name="Lin W."/>
            <person name="Li S."/>
            <person name="Li H."/>
            <person name="Zhou J."/>
            <person name="Ni P."/>
            <person name="Dong W."/>
            <person name="Hu S."/>
            <person name="Zeng C."/>
            <person name="Zhang J."/>
            <person name="Zhang Y."/>
            <person name="Li R."/>
            <person name="Xu Z."/>
            <person name="Li S."/>
            <person name="Li X."/>
            <person name="Zheng H."/>
            <person name="Cong L."/>
            <person name="Lin L."/>
            <person name="Yin J."/>
            <person name="Geng J."/>
            <person name="Li G."/>
            <person name="Shi J."/>
            <person name="Liu J."/>
            <person name="Lv H."/>
            <person name="Li J."/>
            <person name="Wang J."/>
            <person name="Deng Y."/>
            <person name="Ran L."/>
            <person name="Shi X."/>
            <person name="Wang X."/>
            <person name="Wu Q."/>
            <person name="Li C."/>
            <person name="Ren X."/>
            <person name="Wang J."/>
            <person name="Wang X."/>
            <person name="Li D."/>
            <person name="Liu D."/>
            <person name="Zhang X."/>
            <person name="Ji Z."/>
            <person name="Zhao W."/>
            <person name="Sun Y."/>
            <person name="Zhang Z."/>
            <person name="Bao J."/>
            <person name="Han Y."/>
            <person name="Dong L."/>
            <person name="Ji J."/>
            <person name="Chen P."/>
            <person name="Wu S."/>
            <person name="Liu J."/>
            <person name="Xiao Y."/>
            <person name="Bu D."/>
            <person name="Tan J."/>
            <person name="Yang L."/>
            <person name="Ye C."/>
            <person name="Zhang J."/>
            <person name="Xu J."/>
            <person name="Zhou Y."/>
            <person name="Yu Y."/>
            <person name="Zhang B."/>
            <person name="Zhuang S."/>
            <person name="Wei H."/>
            <person name="Liu B."/>
            <person name="Lei M."/>
            <person name="Yu H."/>
            <person name="Li Y."/>
            <person name="Xu H."/>
            <person name="Wei S."/>
            <person name="He X."/>
            <person name="Fang L."/>
            <person name="Zhang Z."/>
            <person name="Zhang Y."/>
            <person name="Huang X."/>
            <person name="Su Z."/>
            <person name="Tong W."/>
            <person name="Li J."/>
            <person name="Tong Z."/>
            <person name="Li S."/>
            <person name="Ye J."/>
            <person name="Wang L."/>
            <person name="Fang L."/>
            <person name="Lei T."/>
            <person name="Chen C.-S."/>
            <person name="Chen H.-C."/>
            <person name="Xu Z."/>
            <person name="Li H."/>
            <person name="Huang H."/>
            <person name="Zhang F."/>
            <person name="Xu H."/>
            <person name="Li N."/>
            <person name="Zhao C."/>
            <person name="Li S."/>
            <person name="Dong L."/>
            <person name="Huang Y."/>
            <person name="Li L."/>
            <person name="Xi Y."/>
            <person name="Qi Q."/>
            <person name="Li W."/>
            <person name="Zhang B."/>
            <person name="Hu W."/>
            <person name="Zhang Y."/>
            <person name="Tian X."/>
            <person name="Jiao Y."/>
            <person name="Liang X."/>
            <person name="Jin J."/>
            <person name="Gao L."/>
            <person name="Zheng W."/>
            <person name="Hao B."/>
            <person name="Liu S.-M."/>
            <person name="Wang W."/>
            <person name="Yuan L."/>
            <person name="Cao M."/>
            <person name="McDermott J."/>
            <person name="Samudrala R."/>
            <person name="Wang J."/>
            <person name="Wong G.K.-S."/>
            <person name="Yang H."/>
        </authorList>
    </citation>
    <scope>NUCLEOTIDE SEQUENCE [LARGE SCALE GENOMIC DNA]</scope>
    <source>
        <strain>cv. Nipponbare</strain>
    </source>
</reference>
<reference key="6">
    <citation type="journal article" date="1988" name="Arch. Biochem. Biophys.">
        <title>Amino acid sequence of a probable amylase/protease inhibitor from rice seeds.</title>
        <authorList>
            <person name="Yu Y.G."/>
            <person name="Chung C.H."/>
            <person name="Fowler A."/>
            <person name="Suh S.W."/>
        </authorList>
    </citation>
    <scope>PROTEIN SEQUENCE OF 26-116</scope>
    <source>
        <tissue>Seed</tissue>
    </source>
</reference>
<reference key="7">
    <citation type="journal article" date="1998" name="J. Mol. Biol.">
        <title>Rice non-specific lipid transfer protein: the 1.6-A crystal structure in the unliganded state reveals a small hydrophobic cavity.</title>
        <authorList>
            <person name="Lee J.Y."/>
            <person name="Min K."/>
            <person name="Cha H."/>
            <person name="Shin D.H."/>
            <person name="Hwang K.Y."/>
            <person name="Suh S.W."/>
        </authorList>
    </citation>
    <scope>X-RAY CRYSTALLOGRAPHY (1.60 ANGSTROMS) OF 26-116</scope>
    <scope>DISULFIDE BONDS</scope>
    <source>
        <tissue>Seed</tissue>
    </source>
</reference>
<evidence type="ECO:0000269" key="1">
    <source>
    </source>
</evidence>
<evidence type="ECO:0000269" key="2">
    <source>
    </source>
</evidence>
<evidence type="ECO:0000305" key="3"/>
<evidence type="ECO:0007744" key="4">
    <source>
        <dbReference type="PDB" id="1RZL"/>
    </source>
</evidence>
<evidence type="ECO:0007829" key="5">
    <source>
        <dbReference type="PDB" id="1RZL"/>
    </source>
</evidence>
<evidence type="ECO:0007829" key="6">
    <source>
        <dbReference type="PDB" id="1UVA"/>
    </source>
</evidence>
<evidence type="ECO:0007829" key="7">
    <source>
        <dbReference type="PDB" id="1UVC"/>
    </source>
</evidence>
<accession>Q0IQK9</accession>
<accession>O22484</accession>
<accession>P23096</accession>
<accession>P93434</accession>
<accession>Q2QYL1</accession>
<comment type="function">
    <text>Plant non-specific lipid-transfer proteins transfer phospholipids as well as galactolipids across membranes. May play a role in wax or cutin deposition in the cell walls of expanding epidermal cells and certain secretory tissues.</text>
</comment>
<comment type="tissue specificity">
    <text>Aleurone (external part) of the seeds.</text>
</comment>
<comment type="similarity">
    <text evidence="3">Belongs to the plant LTP family.</text>
</comment>
<comment type="caution">
    <text evidence="3">Was originally thought to be an inhibitor of alpha-amylase or of a protease and was known as PAPI: probable alpha-amylase/protease inhibitor.</text>
</comment>
<dbReference type="EMBL" id="DP000011">
    <property type="protein sequence ID" value="ABA96284.1"/>
    <property type="molecule type" value="Genomic_DNA"/>
</dbReference>
<dbReference type="EMBL" id="AP008218">
    <property type="protein sequence ID" value="BAF29006.1"/>
    <property type="molecule type" value="Genomic_DNA"/>
</dbReference>
<dbReference type="EMBL" id="AP014968">
    <property type="protein sequence ID" value="BAT15595.1"/>
    <property type="molecule type" value="Genomic_DNA"/>
</dbReference>
<dbReference type="EMBL" id="CM000149">
    <property type="protein sequence ID" value="EAZ19435.1"/>
    <property type="molecule type" value="Genomic_DNA"/>
</dbReference>
<dbReference type="RefSeq" id="XP_015620385.1">
    <property type="nucleotide sequence ID" value="XM_015764899.1"/>
</dbReference>
<dbReference type="PDB" id="1BV2">
    <property type="method" value="NMR"/>
    <property type="chains" value="A=26-116"/>
</dbReference>
<dbReference type="PDB" id="1RZL">
    <property type="method" value="X-ray"/>
    <property type="resolution" value="1.60 A"/>
    <property type="chains" value="A=26-116"/>
</dbReference>
<dbReference type="PDB" id="1UVA">
    <property type="method" value="X-ray"/>
    <property type="resolution" value="2.50 A"/>
    <property type="chains" value="A=26-116"/>
</dbReference>
<dbReference type="PDB" id="1UVB">
    <property type="method" value="X-ray"/>
    <property type="resolution" value="2.10 A"/>
    <property type="chains" value="A=26-116"/>
</dbReference>
<dbReference type="PDB" id="1UVC">
    <property type="method" value="X-ray"/>
    <property type="resolution" value="2.00 A"/>
    <property type="chains" value="A/B=26-116"/>
</dbReference>
<dbReference type="PDBsum" id="1BV2"/>
<dbReference type="PDBsum" id="1RZL"/>
<dbReference type="PDBsum" id="1UVA"/>
<dbReference type="PDBsum" id="1UVB"/>
<dbReference type="PDBsum" id="1UVC"/>
<dbReference type="SMR" id="Q0IQK9"/>
<dbReference type="FunCoup" id="Q0IQK9">
    <property type="interactions" value="676"/>
</dbReference>
<dbReference type="STRING" id="39947.Q0IQK9"/>
<dbReference type="Allergome" id="2788">
    <property type="allergen name" value="Ory s 14"/>
</dbReference>
<dbReference type="PaxDb" id="39947-Q0IQK9"/>
<dbReference type="EnsemblPlants" id="Os12t0115100-00">
    <property type="protein sequence ID" value="Os12t0115100-00"/>
    <property type="gene ID" value="Os12g0115100"/>
</dbReference>
<dbReference type="Gramene" id="Os12t0115100-00">
    <property type="protein sequence ID" value="Os12t0115100-00"/>
    <property type="gene ID" value="Os12g0115100"/>
</dbReference>
<dbReference type="KEGG" id="dosa:Os12g0115100"/>
<dbReference type="eggNOG" id="ENOG502S4CI">
    <property type="taxonomic scope" value="Eukaryota"/>
</dbReference>
<dbReference type="HOGENOM" id="CLU_128423_0_0_1"/>
<dbReference type="InParanoid" id="Q0IQK9"/>
<dbReference type="OMA" id="ISPCLAY"/>
<dbReference type="OrthoDB" id="770678at2759"/>
<dbReference type="EvolutionaryTrace" id="Q0IQK9"/>
<dbReference type="Proteomes" id="UP000000763">
    <property type="component" value="Chromosome 12"/>
</dbReference>
<dbReference type="Proteomes" id="UP000007752">
    <property type="component" value="Chromosome 12"/>
</dbReference>
<dbReference type="Proteomes" id="UP000059680">
    <property type="component" value="Chromosome 12"/>
</dbReference>
<dbReference type="ExpressionAtlas" id="Q0IQK9">
    <property type="expression patterns" value="baseline and differential"/>
</dbReference>
<dbReference type="GO" id="GO:0008289">
    <property type="term" value="F:lipid binding"/>
    <property type="evidence" value="ECO:0007669"/>
    <property type="project" value="UniProtKB-KW"/>
</dbReference>
<dbReference type="GO" id="GO:0006869">
    <property type="term" value="P:lipid transport"/>
    <property type="evidence" value="ECO:0007669"/>
    <property type="project" value="InterPro"/>
</dbReference>
<dbReference type="CDD" id="cd01960">
    <property type="entry name" value="nsLTP1"/>
    <property type="match status" value="1"/>
</dbReference>
<dbReference type="Gene3D" id="1.10.110.10">
    <property type="entry name" value="Plant lipid-transfer and hydrophobic proteins"/>
    <property type="match status" value="1"/>
</dbReference>
<dbReference type="InterPro" id="IPR036312">
    <property type="entry name" value="Bifun_inhib/LTP/seed_sf"/>
</dbReference>
<dbReference type="InterPro" id="IPR016140">
    <property type="entry name" value="Bifunc_inhib/LTP/seed_store"/>
</dbReference>
<dbReference type="InterPro" id="IPR000528">
    <property type="entry name" value="Plant_nsLTP"/>
</dbReference>
<dbReference type="PANTHER" id="PTHR33076">
    <property type="entry name" value="NON-SPECIFIC LIPID-TRANSFER PROTEIN 2-RELATED"/>
    <property type="match status" value="1"/>
</dbReference>
<dbReference type="Pfam" id="PF00234">
    <property type="entry name" value="Tryp_alpha_amyl"/>
    <property type="match status" value="1"/>
</dbReference>
<dbReference type="PRINTS" id="PR00382">
    <property type="entry name" value="LIPIDTRNSFER"/>
</dbReference>
<dbReference type="SMART" id="SM00499">
    <property type="entry name" value="AAI"/>
    <property type="match status" value="1"/>
</dbReference>
<dbReference type="SUPFAM" id="SSF47699">
    <property type="entry name" value="Bifunctional inhibitor/lipid-transfer protein/seed storage 2S albumin"/>
    <property type="match status" value="1"/>
</dbReference>
<dbReference type="PROSITE" id="PS00597">
    <property type="entry name" value="PLANT_LTP"/>
    <property type="match status" value="1"/>
</dbReference>
<feature type="signal peptide" evidence="1">
    <location>
        <begin position="1"/>
        <end position="25"/>
    </location>
</feature>
<feature type="chain" id="PRO_0000018391" description="Non-specific lipid-transfer protein 1">
    <location>
        <begin position="26"/>
        <end position="116"/>
    </location>
</feature>
<feature type="disulfide bond" evidence="2 4">
    <location>
        <begin position="28"/>
        <end position="75"/>
    </location>
</feature>
<feature type="disulfide bond" evidence="2 4">
    <location>
        <begin position="38"/>
        <end position="52"/>
    </location>
</feature>
<feature type="disulfide bond" evidence="2 4">
    <location>
        <begin position="53"/>
        <end position="98"/>
    </location>
</feature>
<feature type="disulfide bond" evidence="2 4">
    <location>
        <begin position="73"/>
        <end position="112"/>
    </location>
</feature>
<feature type="helix" evidence="5">
    <location>
        <begin position="28"/>
        <end position="35"/>
    </location>
</feature>
<feature type="helix" evidence="5">
    <location>
        <begin position="36"/>
        <end position="38"/>
    </location>
</feature>
<feature type="helix" evidence="5">
    <location>
        <begin position="39"/>
        <end position="42"/>
    </location>
</feature>
<feature type="strand" evidence="7">
    <location>
        <begin position="44"/>
        <end position="46"/>
    </location>
</feature>
<feature type="helix" evidence="5">
    <location>
        <begin position="50"/>
        <end position="62"/>
    </location>
</feature>
<feature type="helix" evidence="5">
    <location>
        <begin position="66"/>
        <end position="81"/>
    </location>
</feature>
<feature type="helix" evidence="5">
    <location>
        <begin position="88"/>
        <end position="92"/>
    </location>
</feature>
<feature type="helix" evidence="5">
    <location>
        <begin position="94"/>
        <end position="98"/>
    </location>
</feature>
<feature type="strand" evidence="6">
    <location>
        <begin position="106"/>
        <end position="110"/>
    </location>
</feature>
<feature type="helix" evidence="5">
    <location>
        <begin position="112"/>
        <end position="114"/>
    </location>
</feature>
<name>NLTP1_ORYSJ</name>
<sequence length="116" mass="11345">MARAQLVLVALVAALLLAAPHAAVAITCGQVNSAVGPCLTYARGGAGPSAACCSGVRSLKAAASTTADRRTACNCLKNAARGIKGLNAGNAASIPSKCGVSVPYTISASIDCSRVS</sequence>
<protein>
    <recommendedName>
        <fullName>Non-specific lipid-transfer protein 1</fullName>
        <shortName>LTP 1</shortName>
        <shortName>PAPI</shortName>
    </recommendedName>
</protein>
<gene>
    <name type="primary">LTP</name>
    <name type="ordered locus">Os12g0115100</name>
    <name type="ordered locus">LOC_Os12g02320</name>
    <name type="ORF">OsJ_033644</name>
</gene>